<geneLocation type="chloroplast"/>
<organism>
    <name type="scientific">Oryza sativa subsp. japonica</name>
    <name type="common">Rice</name>
    <dbReference type="NCBI Taxonomy" id="39947"/>
    <lineage>
        <taxon>Eukaryota</taxon>
        <taxon>Viridiplantae</taxon>
        <taxon>Streptophyta</taxon>
        <taxon>Embryophyta</taxon>
        <taxon>Tracheophyta</taxon>
        <taxon>Spermatophyta</taxon>
        <taxon>Magnoliopsida</taxon>
        <taxon>Liliopsida</taxon>
        <taxon>Poales</taxon>
        <taxon>Poaceae</taxon>
        <taxon>BOP clade</taxon>
        <taxon>Oryzoideae</taxon>
        <taxon>Oryzeae</taxon>
        <taxon>Oryzinae</taxon>
        <taxon>Oryza</taxon>
        <taxon>Oryza sativa</taxon>
    </lineage>
</organism>
<keyword id="KW-0150">Chloroplast</keyword>
<keyword id="KW-0240">DNA-directed RNA polymerase</keyword>
<keyword id="KW-0460">Magnesium</keyword>
<keyword id="KW-0479">Metal-binding</keyword>
<keyword id="KW-0548">Nucleotidyltransferase</keyword>
<keyword id="KW-0934">Plastid</keyword>
<keyword id="KW-1185">Reference proteome</keyword>
<keyword id="KW-0804">Transcription</keyword>
<keyword id="KW-0808">Transferase</keyword>
<keyword id="KW-0862">Zinc</keyword>
<dbReference type="EC" id="2.7.7.6" evidence="1"/>
<dbReference type="EMBL" id="X15901">
    <property type="protein sequence ID" value="CAA33987.1"/>
    <property type="molecule type" value="Genomic_DNA"/>
</dbReference>
<dbReference type="EMBL" id="AY522330">
    <property type="protein sequence ID" value="AAS46112.1"/>
    <property type="status" value="ALT_INIT"/>
    <property type="molecule type" value="Genomic_DNA"/>
</dbReference>
<dbReference type="PIR" id="JQ0214">
    <property type="entry name" value="RNRZC1"/>
</dbReference>
<dbReference type="RefSeq" id="NP_039374.1">
    <property type="nucleotide sequence ID" value="NC_001320.1"/>
</dbReference>
<dbReference type="SMR" id="P0C506"/>
<dbReference type="FunCoup" id="P0C506">
    <property type="interactions" value="80"/>
</dbReference>
<dbReference type="STRING" id="39947.P0C506"/>
<dbReference type="PaxDb" id="39947-P0C506"/>
<dbReference type="EnsemblPlants" id="transcript-rpoC1">
    <property type="protein sequence ID" value="cds-CAA33987.1"/>
    <property type="gene ID" value="gene-rpoC1"/>
</dbReference>
<dbReference type="GeneID" id="3131433"/>
<dbReference type="Gramene" id="transcript-rpoC1">
    <property type="protein sequence ID" value="cds-CAA33987.1"/>
    <property type="gene ID" value="gene-rpoC1"/>
</dbReference>
<dbReference type="KEGG" id="dosa:rpoC1"/>
<dbReference type="KEGG" id="osa:3131433"/>
<dbReference type="InParanoid" id="P0C506"/>
<dbReference type="OrthoDB" id="35434at2759"/>
<dbReference type="Proteomes" id="UP000059680">
    <property type="component" value="Chloroplast"/>
</dbReference>
<dbReference type="GO" id="GO:0009507">
    <property type="term" value="C:chloroplast"/>
    <property type="evidence" value="ECO:0007669"/>
    <property type="project" value="UniProtKB-SubCell"/>
</dbReference>
<dbReference type="GO" id="GO:0000428">
    <property type="term" value="C:DNA-directed RNA polymerase complex"/>
    <property type="evidence" value="ECO:0007669"/>
    <property type="project" value="UniProtKB-KW"/>
</dbReference>
<dbReference type="GO" id="GO:0005739">
    <property type="term" value="C:mitochondrion"/>
    <property type="evidence" value="ECO:0007669"/>
    <property type="project" value="GOC"/>
</dbReference>
<dbReference type="GO" id="GO:0009536">
    <property type="term" value="C:plastid"/>
    <property type="evidence" value="ECO:0000305"/>
    <property type="project" value="Gramene"/>
</dbReference>
<dbReference type="GO" id="GO:0003677">
    <property type="term" value="F:DNA binding"/>
    <property type="evidence" value="ECO:0007669"/>
    <property type="project" value="UniProtKB-UniRule"/>
</dbReference>
<dbReference type="GO" id="GO:0003899">
    <property type="term" value="F:DNA-directed RNA polymerase activity"/>
    <property type="evidence" value="ECO:0007669"/>
    <property type="project" value="UniProtKB-UniRule"/>
</dbReference>
<dbReference type="GO" id="GO:0000287">
    <property type="term" value="F:magnesium ion binding"/>
    <property type="evidence" value="ECO:0007669"/>
    <property type="project" value="UniProtKB-UniRule"/>
</dbReference>
<dbReference type="GO" id="GO:0008270">
    <property type="term" value="F:zinc ion binding"/>
    <property type="evidence" value="ECO:0007669"/>
    <property type="project" value="UniProtKB-UniRule"/>
</dbReference>
<dbReference type="GO" id="GO:0006351">
    <property type="term" value="P:DNA-templated transcription"/>
    <property type="evidence" value="ECO:0007669"/>
    <property type="project" value="UniProtKB-UniRule"/>
</dbReference>
<dbReference type="Gene3D" id="1.10.40.90">
    <property type="match status" value="1"/>
</dbReference>
<dbReference type="Gene3D" id="2.40.40.20">
    <property type="match status" value="1"/>
</dbReference>
<dbReference type="Gene3D" id="4.10.860.120">
    <property type="entry name" value="RNA polymerase II, clamp domain"/>
    <property type="match status" value="1"/>
</dbReference>
<dbReference type="Gene3D" id="1.10.274.100">
    <property type="entry name" value="RNA polymerase Rpb1, domain 3"/>
    <property type="match status" value="1"/>
</dbReference>
<dbReference type="HAMAP" id="MF_01323">
    <property type="entry name" value="RNApol_bact_RpoC1"/>
    <property type="match status" value="1"/>
</dbReference>
<dbReference type="InterPro" id="IPR045867">
    <property type="entry name" value="DNA-dir_RpoC_beta_prime"/>
</dbReference>
<dbReference type="InterPro" id="IPR000722">
    <property type="entry name" value="RNA_pol_asu"/>
</dbReference>
<dbReference type="InterPro" id="IPR006592">
    <property type="entry name" value="RNA_pol_N"/>
</dbReference>
<dbReference type="InterPro" id="IPR007080">
    <property type="entry name" value="RNA_pol_Rpb1_1"/>
</dbReference>
<dbReference type="InterPro" id="IPR042102">
    <property type="entry name" value="RNA_pol_Rpb1_3_sf"/>
</dbReference>
<dbReference type="InterPro" id="IPR044893">
    <property type="entry name" value="RNA_pol_Rpb1_clamp_domain"/>
</dbReference>
<dbReference type="InterPro" id="IPR034678">
    <property type="entry name" value="RNApol_RpoC1"/>
</dbReference>
<dbReference type="PANTHER" id="PTHR19376">
    <property type="entry name" value="DNA-DIRECTED RNA POLYMERASE"/>
    <property type="match status" value="1"/>
</dbReference>
<dbReference type="PANTHER" id="PTHR19376:SF54">
    <property type="entry name" value="DNA-DIRECTED RNA POLYMERASE SUBUNIT BETA"/>
    <property type="match status" value="1"/>
</dbReference>
<dbReference type="Pfam" id="PF04997">
    <property type="entry name" value="RNA_pol_Rpb1_1"/>
    <property type="match status" value="1"/>
</dbReference>
<dbReference type="Pfam" id="PF00623">
    <property type="entry name" value="RNA_pol_Rpb1_2"/>
    <property type="match status" value="2"/>
</dbReference>
<dbReference type="SMART" id="SM00663">
    <property type="entry name" value="RPOLA_N"/>
    <property type="match status" value="1"/>
</dbReference>
<dbReference type="SUPFAM" id="SSF64484">
    <property type="entry name" value="beta and beta-prime subunits of DNA dependent RNA-polymerase"/>
    <property type="match status" value="1"/>
</dbReference>
<feature type="chain" id="PRO_0000290096" description="DNA-directed RNA polymerase subunit beta'">
    <location>
        <begin position="1"/>
        <end position="682"/>
    </location>
</feature>
<feature type="binding site" evidence="1">
    <location>
        <position position="69"/>
    </location>
    <ligand>
        <name>Zn(2+)</name>
        <dbReference type="ChEBI" id="CHEBI:29105"/>
    </ligand>
</feature>
<feature type="binding site" evidence="1">
    <location>
        <position position="71"/>
    </location>
    <ligand>
        <name>Zn(2+)</name>
        <dbReference type="ChEBI" id="CHEBI:29105"/>
    </ligand>
</feature>
<feature type="binding site" evidence="1">
    <location>
        <position position="87"/>
    </location>
    <ligand>
        <name>Zn(2+)</name>
        <dbReference type="ChEBI" id="CHEBI:29105"/>
    </ligand>
</feature>
<feature type="binding site" evidence="1">
    <location>
        <position position="90"/>
    </location>
    <ligand>
        <name>Zn(2+)</name>
        <dbReference type="ChEBI" id="CHEBI:29105"/>
    </ligand>
</feature>
<feature type="binding site" evidence="1">
    <location>
        <position position="489"/>
    </location>
    <ligand>
        <name>Mg(2+)</name>
        <dbReference type="ChEBI" id="CHEBI:18420"/>
    </ligand>
</feature>
<feature type="binding site" evidence="1">
    <location>
        <position position="491"/>
    </location>
    <ligand>
        <name>Mg(2+)</name>
        <dbReference type="ChEBI" id="CHEBI:18420"/>
    </ligand>
</feature>
<feature type="binding site" evidence="1">
    <location>
        <position position="493"/>
    </location>
    <ligand>
        <name>Mg(2+)</name>
        <dbReference type="ChEBI" id="CHEBI:18420"/>
    </ligand>
</feature>
<protein>
    <recommendedName>
        <fullName evidence="1">DNA-directed RNA polymerase subunit beta'</fullName>
        <ecNumber evidence="1">2.7.7.6</ecNumber>
    </recommendedName>
    <alternativeName>
        <fullName evidence="1">PEP</fullName>
    </alternativeName>
    <alternativeName>
        <fullName evidence="1">Plastid-encoded RNA polymerase subunit beta'</fullName>
        <shortName evidence="1">RNA polymerase subunit beta'</shortName>
    </alternativeName>
</protein>
<gene>
    <name evidence="1" type="primary">rpoC1</name>
    <name type="ordered locus">LOC_Osp1g00250</name>
    <name type="ORF">Nip037</name>
</gene>
<sequence length="682" mass="78130">MIDQYKHQQLQIGLVSPQQIKAWANKTLPNGEVVGEVTRPSTFHYKTDKPEKDGLFCERIFGPIKSRICACGNSRASGAENEDERFCQKCGVEFVDSRIRRYQMGYIKLACPVTHVWYLKGLPSYIANLLDKPLKKLEGLVYGDFSFARPSAKKPTFLRLRGLFEDEISSCNHSISPFFSTPGFTTFRNREIATGAGAIREQLADLDLRIILENSSVEWKELEDEGYSGDEWEDRKRRIRKVFLIRRMQLAKHFIQTNVEPEWMVLCLLPVLPPELRPIVYRSGDKVVTSDINELYKRVIRRNNNLAYLLKRSELAPADLVMCQEKLVQEAVDTLLDSGSRGQPTRDGHNKVYKSLSDVIEGKEGRFRETLLGKRVDYSGRSVIVVGPSLSLHQCGLPLEIAIKLFQLFVIRDLITKRATSNVRIAKRKIWEKEPIVWEILQEVMRGHPVLLNRAPTLHRLGIQAFQPTLVEGRTICLHPLVCKGFNADFDGDQMAVHLPLSLEAQAEARLLMFSHMNLLSPAIGDPICVPTQDMLIGLYVLTIGNRRGICANRYNSCGNYPNQKVNYNNNNPKYTKDKESLFSSSYDALGAYRQKQICLDSPLWLRWKLDQRVIGLREVPIEVQYESLGTYREIYAHYLVVGNRKKEIRSIYIRTTLGHISFYREIEEAIQGFSQAYSYTI</sequence>
<evidence type="ECO:0000255" key="1">
    <source>
        <dbReference type="HAMAP-Rule" id="MF_01323"/>
    </source>
</evidence>
<evidence type="ECO:0000305" key="2"/>
<accession>P0C506</accession>
<accession>P12092</accession>
<accession>Q6QY19</accession>
<accession>Q6QY82</accession>
<reference key="1">
    <citation type="journal article" date="1990" name="Mol. Gen. Genet.">
        <title>Rice chloroplast RNA polymerase genes: the absence of an intron in rpoC1 and the presence of an extra sequence in rpoC2.</title>
        <authorList>
            <person name="Shimada H."/>
            <person name="Fukuta M."/>
            <person name="Ishikawa M."/>
            <person name="Sugiura M."/>
        </authorList>
    </citation>
    <scope>NUCLEOTIDE SEQUENCE [GENOMIC DNA]</scope>
    <source>
        <strain>cv. Nipponbare</strain>
    </source>
</reference>
<reference key="2">
    <citation type="journal article" date="1989" name="Mol. Gen. Genet.">
        <title>The complete sequence of the rice (Oryza sativa) chloroplast genome: intermolecular recombination between distinct tRNA genes accounts for a major plastid DNA inversion during the evolution of the cereals.</title>
        <authorList>
            <person name="Hiratsuka J."/>
            <person name="Shimada H."/>
            <person name="Whittier R."/>
            <person name="Ishibashi T."/>
            <person name="Sakamoto M."/>
            <person name="Mori M."/>
            <person name="Kondo C."/>
            <person name="Honji Y."/>
            <person name="Sun C.-R."/>
            <person name="Meng B.-Y."/>
            <person name="Li Y.-Q."/>
            <person name="Kanno A."/>
            <person name="Nishizawa Y."/>
            <person name="Hirai A."/>
            <person name="Shinozaki K."/>
            <person name="Sugiura M."/>
        </authorList>
    </citation>
    <scope>NUCLEOTIDE SEQUENCE [LARGE SCALE GENOMIC DNA]</scope>
    <source>
        <strain>cv. Nipponbare</strain>
    </source>
</reference>
<reference key="3">
    <citation type="journal article" date="2004" name="Plant Physiol.">
        <title>A comparison of rice chloroplast genomes.</title>
        <authorList>
            <person name="Tang J."/>
            <person name="Xia H."/>
            <person name="Cao M."/>
            <person name="Zhang X."/>
            <person name="Zeng W."/>
            <person name="Hu S."/>
            <person name="Tong W."/>
            <person name="Wang J."/>
            <person name="Wang J."/>
            <person name="Yu J."/>
            <person name="Yang H."/>
            <person name="Zhu L."/>
        </authorList>
    </citation>
    <scope>NUCLEOTIDE SEQUENCE [LARGE SCALE GENOMIC DNA]</scope>
    <source>
        <strain>cv. Nipponbare</strain>
    </source>
</reference>
<comment type="function">
    <text evidence="1">DNA-dependent RNA polymerase catalyzes the transcription of DNA into RNA using the four ribonucleoside triphosphates as substrates.</text>
</comment>
<comment type="catalytic activity">
    <reaction evidence="1">
        <text>RNA(n) + a ribonucleoside 5'-triphosphate = RNA(n+1) + diphosphate</text>
        <dbReference type="Rhea" id="RHEA:21248"/>
        <dbReference type="Rhea" id="RHEA-COMP:14527"/>
        <dbReference type="Rhea" id="RHEA-COMP:17342"/>
        <dbReference type="ChEBI" id="CHEBI:33019"/>
        <dbReference type="ChEBI" id="CHEBI:61557"/>
        <dbReference type="ChEBI" id="CHEBI:140395"/>
        <dbReference type="EC" id="2.7.7.6"/>
    </reaction>
</comment>
<comment type="cofactor">
    <cofactor evidence="1">
        <name>Mg(2+)</name>
        <dbReference type="ChEBI" id="CHEBI:18420"/>
    </cofactor>
    <text evidence="1">Binds 1 Mg(2+) ion per subunit.</text>
</comment>
<comment type="cofactor">
    <cofactor evidence="1">
        <name>Zn(2+)</name>
        <dbReference type="ChEBI" id="CHEBI:29105"/>
    </cofactor>
    <text evidence="1">Binds 1 Zn(2+) ion per subunit.</text>
</comment>
<comment type="subunit">
    <text evidence="1">In plastids the minimal PEP RNA polymerase catalytic core is composed of four subunits: alpha, beta, beta', and beta''. When a (nuclear-encoded) sigma factor is associated with the core the holoenzyme is formed, which can initiate transcription.</text>
</comment>
<comment type="subcellular location">
    <subcellularLocation>
        <location evidence="1">Plastid</location>
        <location evidence="1">Chloroplast</location>
    </subcellularLocation>
</comment>
<comment type="similarity">
    <text evidence="1">Belongs to the RNA polymerase beta' chain family. RpoC1 subfamily.</text>
</comment>
<comment type="sequence caution" evidence="2">
    <conflict type="erroneous initiation">
        <sequence resource="EMBL-CDS" id="AAS46112"/>
    </conflict>
    <text>Extended N-terminus.</text>
</comment>
<name>RPOC1_ORYSJ</name>
<proteinExistence type="inferred from homology"/>